<proteinExistence type="inferred from homology"/>
<protein>
    <recommendedName>
        <fullName evidence="1">ATP synthase subunit delta</fullName>
    </recommendedName>
    <alternativeName>
        <fullName evidence="1">ATP synthase F(1) sector subunit delta</fullName>
    </alternativeName>
    <alternativeName>
        <fullName evidence="1">F-type ATPase subunit delta</fullName>
        <shortName evidence="1">F-ATPase subunit delta</shortName>
    </alternativeName>
</protein>
<gene>
    <name evidence="1" type="primary">atpH</name>
    <name type="ordered locus">DIP1049</name>
</gene>
<sequence>MHAASREALARVTSDLDKALWEAKENAIATAAHTGAELFDVVEVLDGDRALRVAVADSAKSAEDRAGLVSAVFAGKVSPATLEVLVTSARELWSNPREFRDGLVTLGRRALLRSAEGQGQLGQVEDELFRLSRILDKEPELTLLLDDRSTDGAKKRELLAKVLYGKVTAVTEALALQVIGRRESNAIDDIDALSKEAAALQGHSVAHVVSAGRLNDEQNQALAQKLERIYGRAMSIHSEVDPSLLGGLVIRVGDEVIDGSTSGKLERLRANLA</sequence>
<comment type="function">
    <text evidence="1">F(1)F(0) ATP synthase produces ATP from ADP in the presence of a proton or sodium gradient. F-type ATPases consist of two structural domains, F(1) containing the extramembraneous catalytic core and F(0) containing the membrane proton channel, linked together by a central stalk and a peripheral stalk. During catalysis, ATP synthesis in the catalytic domain of F(1) is coupled via a rotary mechanism of the central stalk subunits to proton translocation.</text>
</comment>
<comment type="function">
    <text evidence="1">This protein is part of the stalk that links CF(0) to CF(1). It either transmits conformational changes from CF(0) to CF(1) or is implicated in proton conduction.</text>
</comment>
<comment type="subunit">
    <text evidence="1">F-type ATPases have 2 components, F(1) - the catalytic core - and F(0) - the membrane proton channel. F(1) has five subunits: alpha(3), beta(3), gamma(1), delta(1), epsilon(1). F(0) has three main subunits: a(1), b(2) and c(10-14). The alpha and beta chains form an alternating ring which encloses part of the gamma chain. F(1) is attached to F(0) by a central stalk formed by the gamma and epsilon chains, while a peripheral stalk is formed by the delta and b chains.</text>
</comment>
<comment type="subcellular location">
    <subcellularLocation>
        <location evidence="1">Cell membrane</location>
        <topology evidence="1">Peripheral membrane protein</topology>
    </subcellularLocation>
</comment>
<comment type="similarity">
    <text evidence="1">Belongs to the ATPase delta chain family.</text>
</comment>
<organism>
    <name type="scientific">Corynebacterium diphtheriae (strain ATCC 700971 / NCTC 13129 / Biotype gravis)</name>
    <dbReference type="NCBI Taxonomy" id="257309"/>
    <lineage>
        <taxon>Bacteria</taxon>
        <taxon>Bacillati</taxon>
        <taxon>Actinomycetota</taxon>
        <taxon>Actinomycetes</taxon>
        <taxon>Mycobacteriales</taxon>
        <taxon>Corynebacteriaceae</taxon>
        <taxon>Corynebacterium</taxon>
    </lineage>
</organism>
<name>ATPD_CORDI</name>
<dbReference type="EMBL" id="BX248356">
    <property type="protein sequence ID" value="CAE49569.1"/>
    <property type="molecule type" value="Genomic_DNA"/>
</dbReference>
<dbReference type="RefSeq" id="WP_003851097.1">
    <property type="nucleotide sequence ID" value="NC_002935.2"/>
</dbReference>
<dbReference type="SMR" id="Q6NHT2"/>
<dbReference type="STRING" id="257309.DIP1049"/>
<dbReference type="KEGG" id="cdi:DIP1049"/>
<dbReference type="HOGENOM" id="CLU_088880_0_0_11"/>
<dbReference type="Proteomes" id="UP000002198">
    <property type="component" value="Chromosome"/>
</dbReference>
<dbReference type="GO" id="GO:0005886">
    <property type="term" value="C:plasma membrane"/>
    <property type="evidence" value="ECO:0007669"/>
    <property type="project" value="UniProtKB-SubCell"/>
</dbReference>
<dbReference type="GO" id="GO:0045259">
    <property type="term" value="C:proton-transporting ATP synthase complex"/>
    <property type="evidence" value="ECO:0007669"/>
    <property type="project" value="UniProtKB-KW"/>
</dbReference>
<dbReference type="GO" id="GO:0046933">
    <property type="term" value="F:proton-transporting ATP synthase activity, rotational mechanism"/>
    <property type="evidence" value="ECO:0007669"/>
    <property type="project" value="UniProtKB-UniRule"/>
</dbReference>
<dbReference type="Gene3D" id="1.10.520.20">
    <property type="entry name" value="N-terminal domain of the delta subunit of the F1F0-ATP synthase"/>
    <property type="match status" value="1"/>
</dbReference>
<dbReference type="HAMAP" id="MF_01416">
    <property type="entry name" value="ATP_synth_delta_bact"/>
    <property type="match status" value="1"/>
</dbReference>
<dbReference type="InterPro" id="IPR026015">
    <property type="entry name" value="ATP_synth_OSCP/delta_N_sf"/>
</dbReference>
<dbReference type="InterPro" id="IPR020781">
    <property type="entry name" value="ATPase_OSCP/d_CS"/>
</dbReference>
<dbReference type="InterPro" id="IPR000711">
    <property type="entry name" value="ATPase_OSCP/dsu"/>
</dbReference>
<dbReference type="NCBIfam" id="TIGR01145">
    <property type="entry name" value="ATP_synt_delta"/>
    <property type="match status" value="1"/>
</dbReference>
<dbReference type="NCBIfam" id="NF009967">
    <property type="entry name" value="PRK13430.1"/>
    <property type="match status" value="1"/>
</dbReference>
<dbReference type="PANTHER" id="PTHR11910">
    <property type="entry name" value="ATP SYNTHASE DELTA CHAIN"/>
    <property type="match status" value="1"/>
</dbReference>
<dbReference type="Pfam" id="PF00213">
    <property type="entry name" value="OSCP"/>
    <property type="match status" value="1"/>
</dbReference>
<dbReference type="PRINTS" id="PR00125">
    <property type="entry name" value="ATPASEDELTA"/>
</dbReference>
<dbReference type="PROSITE" id="PS00389">
    <property type="entry name" value="ATPASE_DELTA"/>
    <property type="match status" value="1"/>
</dbReference>
<evidence type="ECO:0000255" key="1">
    <source>
        <dbReference type="HAMAP-Rule" id="MF_01416"/>
    </source>
</evidence>
<reference key="1">
    <citation type="journal article" date="2003" name="Nucleic Acids Res.">
        <title>The complete genome sequence and analysis of Corynebacterium diphtheriae NCTC13129.</title>
        <authorList>
            <person name="Cerdeno-Tarraga A.-M."/>
            <person name="Efstratiou A."/>
            <person name="Dover L.G."/>
            <person name="Holden M.T.G."/>
            <person name="Pallen M.J."/>
            <person name="Bentley S.D."/>
            <person name="Besra G.S."/>
            <person name="Churcher C.M."/>
            <person name="James K.D."/>
            <person name="De Zoysa A."/>
            <person name="Chillingworth T."/>
            <person name="Cronin A."/>
            <person name="Dowd L."/>
            <person name="Feltwell T."/>
            <person name="Hamlin N."/>
            <person name="Holroyd S."/>
            <person name="Jagels K."/>
            <person name="Moule S."/>
            <person name="Quail M.A."/>
            <person name="Rabbinowitsch E."/>
            <person name="Rutherford K.M."/>
            <person name="Thomson N.R."/>
            <person name="Unwin L."/>
            <person name="Whitehead S."/>
            <person name="Barrell B.G."/>
            <person name="Parkhill J."/>
        </authorList>
    </citation>
    <scope>NUCLEOTIDE SEQUENCE [LARGE SCALE GENOMIC DNA]</scope>
    <source>
        <strain>ATCC 700971 / NCTC 13129 / Biotype gravis</strain>
    </source>
</reference>
<accession>Q6NHT2</accession>
<keyword id="KW-0066">ATP synthesis</keyword>
<keyword id="KW-1003">Cell membrane</keyword>
<keyword id="KW-0139">CF(1)</keyword>
<keyword id="KW-0375">Hydrogen ion transport</keyword>
<keyword id="KW-0406">Ion transport</keyword>
<keyword id="KW-0472">Membrane</keyword>
<keyword id="KW-1185">Reference proteome</keyword>
<keyword id="KW-0813">Transport</keyword>
<feature type="chain" id="PRO_0000382088" description="ATP synthase subunit delta">
    <location>
        <begin position="1"/>
        <end position="273"/>
    </location>
</feature>